<gene>
    <name evidence="1" type="primary">dapH</name>
    <name type="ordered locus">llmg_0291</name>
</gene>
<name>DAPH_LACLM</name>
<organism>
    <name type="scientific">Lactococcus lactis subsp. cremoris (strain MG1363)</name>
    <dbReference type="NCBI Taxonomy" id="416870"/>
    <lineage>
        <taxon>Bacteria</taxon>
        <taxon>Bacillati</taxon>
        <taxon>Bacillota</taxon>
        <taxon>Bacilli</taxon>
        <taxon>Lactobacillales</taxon>
        <taxon>Streptococcaceae</taxon>
        <taxon>Lactococcus</taxon>
        <taxon>Lactococcus cremoris subsp. cremoris</taxon>
    </lineage>
</organism>
<feature type="chain" id="PRO_0000376671" description="2,3,4,5-tetrahydropyridine-2,6-dicarboxylate N-acetyltransferase">
    <location>
        <begin position="1"/>
        <end position="256"/>
    </location>
</feature>
<keyword id="KW-0012">Acyltransferase</keyword>
<keyword id="KW-0028">Amino-acid biosynthesis</keyword>
<keyword id="KW-0220">Diaminopimelate biosynthesis</keyword>
<keyword id="KW-0457">Lysine biosynthesis</keyword>
<keyword id="KW-0677">Repeat</keyword>
<keyword id="KW-0808">Transferase</keyword>
<protein>
    <recommendedName>
        <fullName evidence="1">2,3,4,5-tetrahydropyridine-2,6-dicarboxylate N-acetyltransferase</fullName>
        <ecNumber evidence="1">2.3.1.89</ecNumber>
    </recommendedName>
    <alternativeName>
        <fullName evidence="1">Tetrahydrodipicolinate N-acetyltransferase</fullName>
        <shortName evidence="1">THP acetyltransferase</shortName>
        <shortName evidence="1">Tetrahydropicolinate acetylase</shortName>
    </alternativeName>
</protein>
<evidence type="ECO:0000255" key="1">
    <source>
        <dbReference type="HAMAP-Rule" id="MF_01691"/>
    </source>
</evidence>
<dbReference type="EC" id="2.3.1.89" evidence="1"/>
<dbReference type="EMBL" id="AM406671">
    <property type="protein sequence ID" value="CAL96898.1"/>
    <property type="molecule type" value="Genomic_DNA"/>
</dbReference>
<dbReference type="RefSeq" id="WP_011834361.1">
    <property type="nucleotide sequence ID" value="NC_009004.1"/>
</dbReference>
<dbReference type="SMR" id="A2RI05"/>
<dbReference type="STRING" id="416870.llmg_0291"/>
<dbReference type="KEGG" id="llm:llmg_0291"/>
<dbReference type="eggNOG" id="COG2171">
    <property type="taxonomic scope" value="Bacteria"/>
</dbReference>
<dbReference type="HOGENOM" id="CLU_103751_0_0_9"/>
<dbReference type="OrthoDB" id="9788080at2"/>
<dbReference type="PhylomeDB" id="A2RI05"/>
<dbReference type="UniPathway" id="UPA00034">
    <property type="reaction ID" value="UER00022"/>
</dbReference>
<dbReference type="Proteomes" id="UP000000364">
    <property type="component" value="Chromosome"/>
</dbReference>
<dbReference type="GO" id="GO:0047200">
    <property type="term" value="F:tetrahydrodipicolinate N-acetyltransferase activity"/>
    <property type="evidence" value="ECO:0007669"/>
    <property type="project" value="UniProtKB-EC"/>
</dbReference>
<dbReference type="GO" id="GO:0019877">
    <property type="term" value="P:diaminopimelate biosynthetic process"/>
    <property type="evidence" value="ECO:0007669"/>
    <property type="project" value="UniProtKB-UniRule"/>
</dbReference>
<dbReference type="GO" id="GO:0009089">
    <property type="term" value="P:lysine biosynthetic process via diaminopimelate"/>
    <property type="evidence" value="ECO:0007669"/>
    <property type="project" value="UniProtKB-UniRule"/>
</dbReference>
<dbReference type="CDD" id="cd03350">
    <property type="entry name" value="LbH_THP_succinylT"/>
    <property type="match status" value="1"/>
</dbReference>
<dbReference type="Gene3D" id="2.160.10.10">
    <property type="entry name" value="Hexapeptide repeat proteins"/>
    <property type="match status" value="1"/>
</dbReference>
<dbReference type="Gene3D" id="3.30.70.250">
    <property type="entry name" value="Malonyl-CoA ACP transacylase, ACP-binding"/>
    <property type="match status" value="1"/>
</dbReference>
<dbReference type="HAMAP" id="MF_01691">
    <property type="entry name" value="DapH"/>
    <property type="match status" value="1"/>
</dbReference>
<dbReference type="InterPro" id="IPR019873">
    <property type="entry name" value="DapH"/>
</dbReference>
<dbReference type="InterPro" id="IPR013710">
    <property type="entry name" value="DapH_N"/>
</dbReference>
<dbReference type="InterPro" id="IPR001451">
    <property type="entry name" value="Hexapep"/>
</dbReference>
<dbReference type="InterPro" id="IPR018357">
    <property type="entry name" value="Hexapep_transf_CS"/>
</dbReference>
<dbReference type="InterPro" id="IPR050179">
    <property type="entry name" value="Trans_hexapeptide_repeat"/>
</dbReference>
<dbReference type="InterPro" id="IPR011004">
    <property type="entry name" value="Trimer_LpxA-like_sf"/>
</dbReference>
<dbReference type="NCBIfam" id="TIGR03532">
    <property type="entry name" value="DapD_Ac"/>
    <property type="match status" value="1"/>
</dbReference>
<dbReference type="PANTHER" id="PTHR43300:SF10">
    <property type="entry name" value="2,3,4,5-TETRAHYDROPYRIDINE-2,6-DICARBOXYLATE N-ACETYLTRANSFERASE"/>
    <property type="match status" value="1"/>
</dbReference>
<dbReference type="PANTHER" id="PTHR43300">
    <property type="entry name" value="ACETYLTRANSFERASE"/>
    <property type="match status" value="1"/>
</dbReference>
<dbReference type="Pfam" id="PF08503">
    <property type="entry name" value="DapH_N"/>
    <property type="match status" value="1"/>
</dbReference>
<dbReference type="Pfam" id="PF00132">
    <property type="entry name" value="Hexapep"/>
    <property type="match status" value="1"/>
</dbReference>
<dbReference type="Pfam" id="PF14602">
    <property type="entry name" value="Hexapep_2"/>
    <property type="match status" value="1"/>
</dbReference>
<dbReference type="SUPFAM" id="SSF51161">
    <property type="entry name" value="Trimeric LpxA-like enzymes"/>
    <property type="match status" value="1"/>
</dbReference>
<dbReference type="PROSITE" id="PS00101">
    <property type="entry name" value="HEXAPEP_TRANSFERASES"/>
    <property type="match status" value="2"/>
</dbReference>
<comment type="function">
    <text evidence="1">Catalyzes the transfer of an acetyl group from acetyl-CoA to tetrahydrodipicolinate.</text>
</comment>
<comment type="catalytic activity">
    <reaction evidence="1">
        <text>(S)-2,3,4,5-tetrahydrodipicolinate + acetyl-CoA + H2O = L-2-acetamido-6-oxoheptanedioate + CoA</text>
        <dbReference type="Rhea" id="RHEA:13085"/>
        <dbReference type="ChEBI" id="CHEBI:15377"/>
        <dbReference type="ChEBI" id="CHEBI:16845"/>
        <dbReference type="ChEBI" id="CHEBI:57287"/>
        <dbReference type="ChEBI" id="CHEBI:57288"/>
        <dbReference type="ChEBI" id="CHEBI:58117"/>
        <dbReference type="EC" id="2.3.1.89"/>
    </reaction>
</comment>
<comment type="pathway">
    <text evidence="1">Amino-acid biosynthesis; L-lysine biosynthesis via DAP pathway; LL-2,6-diaminopimelate from (S)-tetrahydrodipicolinate (acetylase route): step 1/3.</text>
</comment>
<comment type="similarity">
    <text evidence="1">Belongs to the transferase hexapeptide repeat family. DapH subfamily.</text>
</comment>
<proteinExistence type="inferred from homology"/>
<reference key="1">
    <citation type="journal article" date="2007" name="J. Bacteriol.">
        <title>The complete genome sequence of the lactic acid bacterial paradigm Lactococcus lactis subsp. cremoris MG1363.</title>
        <authorList>
            <person name="Wegmann U."/>
            <person name="O'Connell-Motherway M."/>
            <person name="Zomer A."/>
            <person name="Buist G."/>
            <person name="Shearman C."/>
            <person name="Canchaya C."/>
            <person name="Ventura M."/>
            <person name="Goesmann A."/>
            <person name="Gasson M.J."/>
            <person name="Kuipers O.P."/>
            <person name="van Sinderen D."/>
            <person name="Kok J."/>
        </authorList>
    </citation>
    <scope>NUCLEOTIDE SEQUENCE [LARGE SCALE GENOMIC DNA]</scope>
    <source>
        <strain>MG1363</strain>
    </source>
</reference>
<sequence length="256" mass="26668">MEAQKLSAQEIIQFIGNAEKKTGVKVTLSGMPSFKSAGFLAENGRPNFKALANKGIQVLGDFHTHYSLKIIIGDWQAVRPLLEGLTENKDYTIEFEGRNSAVPLLDTRAINARIEPGAIIRDQVTIGDNAVIMMGAIINIGAEIGEGTMIDMGAVLGGRATVGKNSHIGAGAVLAGVIEPASAEPVRVGDNVLVGANAVVIEGVQVGSGSVVAAGAIVTQDVPENVVVAGVPARIIKEIDEKTAQKTALEDALRNL</sequence>
<accession>A2RI05</accession>